<organism>
    <name type="scientific">Bos taurus</name>
    <name type="common">Bovine</name>
    <dbReference type="NCBI Taxonomy" id="9913"/>
    <lineage>
        <taxon>Eukaryota</taxon>
        <taxon>Metazoa</taxon>
        <taxon>Chordata</taxon>
        <taxon>Craniata</taxon>
        <taxon>Vertebrata</taxon>
        <taxon>Euteleostomi</taxon>
        <taxon>Mammalia</taxon>
        <taxon>Eutheria</taxon>
        <taxon>Laurasiatheria</taxon>
        <taxon>Artiodactyla</taxon>
        <taxon>Ruminantia</taxon>
        <taxon>Pecora</taxon>
        <taxon>Bovidae</taxon>
        <taxon>Bovinae</taxon>
        <taxon>Bos</taxon>
    </lineage>
</organism>
<protein>
    <recommendedName>
        <fullName>Sperm acrosome-associated protein 5</fullName>
        <ecNumber>3.2.1.17</ecNumber>
    </recommendedName>
    <alternativeName>
        <fullName>Lysozyme-like protein 5</fullName>
    </alternativeName>
</protein>
<proteinExistence type="evidence at transcript level"/>
<sequence length="156" mass="17580">MQVSGTIVVILMAANVEAKIYERCDLAKKLEAAGLNGFKGYTIGDWLCMAHYESGFDTSFVNHNPDGSSEYGIFQLNSAWWCYNGVTPSENLCHMDCHELLNRHILDDIMCAKKVVSSESGMSAWDSWNQHCYGYDLSEWLRGCHMNAKPNKKIIS</sequence>
<gene>
    <name type="primary">SPACA5</name>
    <name type="synonym">LYZL5</name>
</gene>
<reference key="1">
    <citation type="submission" date="2005-10" db="EMBL/GenBank/DDBJ databases">
        <authorList>
            <consortium name="NIH - Mammalian Gene Collection (MGC) project"/>
        </authorList>
    </citation>
    <scope>NUCLEOTIDE SEQUENCE [LARGE SCALE MRNA]</scope>
    <source>
        <strain>Crossbred X Angus</strain>
        <tissue>Liver</tissue>
    </source>
</reference>
<keyword id="KW-1015">Disulfide bond</keyword>
<keyword id="KW-0326">Glycosidase</keyword>
<keyword id="KW-0378">Hydrolase</keyword>
<keyword id="KW-1185">Reference proteome</keyword>
<keyword id="KW-0964">Secreted</keyword>
<keyword id="KW-0732">Signal</keyword>
<accession>Q32PD6</accession>
<comment type="catalytic activity">
    <reaction>
        <text>Hydrolysis of (1-&gt;4)-beta-linkages between N-acetylmuramic acid and N-acetyl-D-glucosamine residues in a peptidoglycan and between N-acetyl-D-glucosamine residues in chitodextrins.</text>
        <dbReference type="EC" id="3.2.1.17"/>
    </reaction>
</comment>
<comment type="subcellular location">
    <subcellularLocation>
        <location evidence="3">Secreted</location>
    </subcellularLocation>
</comment>
<comment type="similarity">
    <text evidence="2">Belongs to the glycosyl hydrolase 22 family.</text>
</comment>
<name>LYZL5_BOVIN</name>
<evidence type="ECO:0000255" key="1"/>
<evidence type="ECO:0000255" key="2">
    <source>
        <dbReference type="PROSITE-ProRule" id="PRU00680"/>
    </source>
</evidence>
<evidence type="ECO:0000305" key="3"/>
<dbReference type="EC" id="3.2.1.17"/>
<dbReference type="EMBL" id="BC108157">
    <property type="protein sequence ID" value="AAI08158.1"/>
    <property type="molecule type" value="mRNA"/>
</dbReference>
<dbReference type="RefSeq" id="NP_001035626.1">
    <property type="nucleotide sequence ID" value="NM_001040536.2"/>
</dbReference>
<dbReference type="SMR" id="Q32PD6"/>
<dbReference type="FunCoup" id="Q32PD6">
    <property type="interactions" value="52"/>
</dbReference>
<dbReference type="STRING" id="9913.ENSBTAP00000055963"/>
<dbReference type="CAZy" id="GH22">
    <property type="family name" value="Glycoside Hydrolase Family 22"/>
</dbReference>
<dbReference type="PaxDb" id="9913-ENSBTAP00000055963"/>
<dbReference type="Ensembl" id="ENSBTAT00000063388.2">
    <property type="protein sequence ID" value="ENSBTAP00000055963.1"/>
    <property type="gene ID" value="ENSBTAG00000046069.2"/>
</dbReference>
<dbReference type="GeneID" id="517880"/>
<dbReference type="KEGG" id="bta:517880"/>
<dbReference type="CTD" id="389852"/>
<dbReference type="VEuPathDB" id="HostDB:ENSBTAG00000046069"/>
<dbReference type="eggNOG" id="ENOG502SUHW">
    <property type="taxonomic scope" value="Eukaryota"/>
</dbReference>
<dbReference type="GeneTree" id="ENSGT00940000162205"/>
<dbReference type="HOGENOM" id="CLU_111620_0_1_1"/>
<dbReference type="InParanoid" id="Q32PD6"/>
<dbReference type="OMA" id="AWWCNNG"/>
<dbReference type="OrthoDB" id="17373at2759"/>
<dbReference type="TreeFam" id="TF324882"/>
<dbReference type="Proteomes" id="UP000009136">
    <property type="component" value="Chromosome X"/>
</dbReference>
<dbReference type="Bgee" id="ENSBTAG00000046069">
    <property type="expression patterns" value="Expressed in semen and 13 other cell types or tissues"/>
</dbReference>
<dbReference type="GO" id="GO:0001669">
    <property type="term" value="C:acrosomal vesicle"/>
    <property type="evidence" value="ECO:0000318"/>
    <property type="project" value="GO_Central"/>
</dbReference>
<dbReference type="GO" id="GO:0005576">
    <property type="term" value="C:extracellular region"/>
    <property type="evidence" value="ECO:0007669"/>
    <property type="project" value="UniProtKB-SubCell"/>
</dbReference>
<dbReference type="GO" id="GO:0036126">
    <property type="term" value="C:sperm flagellum"/>
    <property type="evidence" value="ECO:0000318"/>
    <property type="project" value="GO_Central"/>
</dbReference>
<dbReference type="GO" id="GO:0003796">
    <property type="term" value="F:lysozyme activity"/>
    <property type="evidence" value="ECO:0000318"/>
    <property type="project" value="GO_Central"/>
</dbReference>
<dbReference type="GO" id="GO:0007342">
    <property type="term" value="P:fusion of sperm to egg plasma membrane involved in single fertilization"/>
    <property type="evidence" value="ECO:0000318"/>
    <property type="project" value="GO_Central"/>
</dbReference>
<dbReference type="CDD" id="cd16897">
    <property type="entry name" value="LYZ_C"/>
    <property type="match status" value="1"/>
</dbReference>
<dbReference type="FunFam" id="1.10.530.10:FF:000001">
    <property type="entry name" value="Lysozyme C"/>
    <property type="match status" value="1"/>
</dbReference>
<dbReference type="Gene3D" id="1.10.530.10">
    <property type="match status" value="1"/>
</dbReference>
<dbReference type="InterPro" id="IPR001916">
    <property type="entry name" value="Glyco_hydro_22"/>
</dbReference>
<dbReference type="InterPro" id="IPR000974">
    <property type="entry name" value="Glyco_hydro_22_lys"/>
</dbReference>
<dbReference type="InterPro" id="IPR023346">
    <property type="entry name" value="Lysozyme-like_dom_sf"/>
</dbReference>
<dbReference type="PANTHER" id="PTHR11407">
    <property type="entry name" value="LYSOZYME C"/>
    <property type="match status" value="1"/>
</dbReference>
<dbReference type="PANTHER" id="PTHR11407:SF31">
    <property type="entry name" value="SPERM ACROSOME-ASSOCIATED PROTEIN 5"/>
    <property type="match status" value="1"/>
</dbReference>
<dbReference type="Pfam" id="PF00062">
    <property type="entry name" value="Lys"/>
    <property type="match status" value="1"/>
</dbReference>
<dbReference type="PRINTS" id="PR00137">
    <property type="entry name" value="LYSOZYME"/>
</dbReference>
<dbReference type="PRINTS" id="PR00135">
    <property type="entry name" value="LYZLACT"/>
</dbReference>
<dbReference type="SMART" id="SM00263">
    <property type="entry name" value="LYZ1"/>
    <property type="match status" value="1"/>
</dbReference>
<dbReference type="SUPFAM" id="SSF53955">
    <property type="entry name" value="Lysozyme-like"/>
    <property type="match status" value="1"/>
</dbReference>
<dbReference type="PROSITE" id="PS51348">
    <property type="entry name" value="GLYCOSYL_HYDROL_F22_2"/>
    <property type="match status" value="1"/>
</dbReference>
<feature type="signal peptide" evidence="1">
    <location>
        <begin position="1"/>
        <end position="18"/>
    </location>
</feature>
<feature type="chain" id="PRO_0000284469" description="Sperm acrosome-associated protein 5">
    <location>
        <begin position="19"/>
        <end position="156"/>
    </location>
</feature>
<feature type="domain" description="C-type lysozyme" evidence="2">
    <location>
        <begin position="19"/>
        <end position="147"/>
    </location>
</feature>
<feature type="active site" evidence="2">
    <location>
        <position position="53"/>
    </location>
</feature>
<feature type="disulfide bond" evidence="2">
    <location>
        <begin position="24"/>
        <end position="144"/>
    </location>
</feature>
<feature type="disulfide bond" evidence="2">
    <location>
        <begin position="48"/>
        <end position="132"/>
    </location>
</feature>
<feature type="disulfide bond" evidence="2">
    <location>
        <begin position="82"/>
        <end position="97"/>
    </location>
</feature>
<feature type="disulfide bond" evidence="2">
    <location>
        <begin position="93"/>
        <end position="111"/>
    </location>
</feature>